<organism>
    <name type="scientific">Homo sapiens</name>
    <name type="common">Human</name>
    <dbReference type="NCBI Taxonomy" id="9606"/>
    <lineage>
        <taxon>Eukaryota</taxon>
        <taxon>Metazoa</taxon>
        <taxon>Chordata</taxon>
        <taxon>Craniata</taxon>
        <taxon>Vertebrata</taxon>
        <taxon>Euteleostomi</taxon>
        <taxon>Mammalia</taxon>
        <taxon>Eutheria</taxon>
        <taxon>Euarchontoglires</taxon>
        <taxon>Primates</taxon>
        <taxon>Haplorrhini</taxon>
        <taxon>Catarrhini</taxon>
        <taxon>Hominidae</taxon>
        <taxon>Homo</taxon>
    </lineage>
</organism>
<feature type="chain" id="PRO_0000286864" description="Protein Daple">
    <location>
        <begin position="1"/>
        <end position="2028"/>
    </location>
</feature>
<feature type="domain" description="Calponin-homology (CH)" evidence="3">
    <location>
        <begin position="11"/>
        <end position="131"/>
    </location>
</feature>
<feature type="region of interest" description="Disordered" evidence="4">
    <location>
        <begin position="222"/>
        <end position="250"/>
    </location>
</feature>
<feature type="region of interest" description="Disordered" evidence="4">
    <location>
        <begin position="1011"/>
        <end position="1043"/>
    </location>
</feature>
<feature type="region of interest" description="Disordered" evidence="4">
    <location>
        <begin position="1419"/>
        <end position="1724"/>
    </location>
</feature>
<feature type="region of interest" description="Disordered" evidence="4">
    <location>
        <begin position="1736"/>
        <end position="1803"/>
    </location>
</feature>
<feature type="region of interest" description="Disordered" evidence="4">
    <location>
        <begin position="1816"/>
        <end position="2021"/>
    </location>
</feature>
<feature type="region of interest" description="DVL1-binding" evidence="1">
    <location>
        <begin position="2026"/>
        <end position="2028"/>
    </location>
</feature>
<feature type="coiled-coil region" evidence="2">
    <location>
        <begin position="247"/>
        <end position="428"/>
    </location>
</feature>
<feature type="coiled-coil region" evidence="2">
    <location>
        <begin position="456"/>
        <end position="1017"/>
    </location>
</feature>
<feature type="coiled-coil region" evidence="2">
    <location>
        <begin position="1045"/>
        <end position="1094"/>
    </location>
</feature>
<feature type="coiled-coil region" evidence="2">
    <location>
        <begin position="1139"/>
        <end position="1393"/>
    </location>
</feature>
<feature type="short sequence motif" description="GBA" evidence="12">
    <location>
        <begin position="1661"/>
        <end position="1691"/>
    </location>
</feature>
<feature type="short sequence motif" description="PDZ-binding" evidence="2">
    <location>
        <begin position="2025"/>
        <end position="2028"/>
    </location>
</feature>
<feature type="compositionally biased region" description="Low complexity" evidence="4">
    <location>
        <begin position="229"/>
        <end position="245"/>
    </location>
</feature>
<feature type="compositionally biased region" description="Polar residues" evidence="4">
    <location>
        <begin position="1011"/>
        <end position="1024"/>
    </location>
</feature>
<feature type="compositionally biased region" description="Basic and acidic residues" evidence="4">
    <location>
        <begin position="1419"/>
        <end position="1428"/>
    </location>
</feature>
<feature type="compositionally biased region" description="Low complexity" evidence="4">
    <location>
        <begin position="1439"/>
        <end position="1450"/>
    </location>
</feature>
<feature type="compositionally biased region" description="Low complexity" evidence="4">
    <location>
        <begin position="1517"/>
        <end position="1534"/>
    </location>
</feature>
<feature type="compositionally biased region" description="Low complexity" evidence="4">
    <location>
        <begin position="1568"/>
        <end position="1588"/>
    </location>
</feature>
<feature type="compositionally biased region" description="Polar residues" evidence="4">
    <location>
        <begin position="1589"/>
        <end position="1604"/>
    </location>
</feature>
<feature type="compositionally biased region" description="Basic and acidic residues" evidence="4">
    <location>
        <begin position="1689"/>
        <end position="1704"/>
    </location>
</feature>
<feature type="compositionally biased region" description="Low complexity" evidence="4">
    <location>
        <begin position="1792"/>
        <end position="1803"/>
    </location>
</feature>
<feature type="compositionally biased region" description="Polar residues" evidence="4">
    <location>
        <begin position="1842"/>
        <end position="1855"/>
    </location>
</feature>
<feature type="compositionally biased region" description="Basic and acidic residues" evidence="4">
    <location>
        <begin position="1879"/>
        <end position="1897"/>
    </location>
</feature>
<feature type="compositionally biased region" description="Low complexity" evidence="4">
    <location>
        <begin position="1902"/>
        <end position="1924"/>
    </location>
</feature>
<feature type="modified residue" description="Phosphoserine" evidence="24">
    <location>
        <position position="227"/>
    </location>
</feature>
<feature type="modified residue" description="Phosphoserine" evidence="24">
    <location>
        <position position="239"/>
    </location>
</feature>
<feature type="modified residue" description="Phosphoserine" evidence="24">
    <location>
        <position position="486"/>
    </location>
</feature>
<feature type="modified residue" description="Phosphoserine" evidence="23">
    <location>
        <position position="1444"/>
    </location>
</feature>
<feature type="modified residue" description="Phosphoserine" evidence="24">
    <location>
        <position position="1601"/>
    </location>
</feature>
<feature type="modified residue" description="Phosphoserine" evidence="22 24">
    <location>
        <position position="1806"/>
    </location>
</feature>
<feature type="modified residue" description="Phosphothreonine" evidence="24">
    <location>
        <position position="1954"/>
    </location>
</feature>
<feature type="splice variant" id="VSP_052389" description="In isoform 3." evidence="17">
    <location>
        <begin position="1"/>
        <end position="1550"/>
    </location>
</feature>
<feature type="splice variant" id="VSP_052390" description="In isoform 2." evidence="16">
    <location>
        <begin position="1"/>
        <end position="1476"/>
    </location>
</feature>
<feature type="splice variant" id="VSP_052391" description="In isoform 2." evidence="16">
    <original>SVGKG</original>
    <variation>MSVLS</variation>
    <location>
        <begin position="1477"/>
        <end position="1481"/>
    </location>
</feature>
<feature type="splice variant" id="VSP_052392" description="In isoform 3." evidence="17">
    <original>LCEPSLEFEVPNHRQY</original>
    <variation>MPSSTLPGWPGSSGGP</variation>
    <location>
        <begin position="1551"/>
        <end position="1566"/>
    </location>
</feature>
<feature type="sequence variant" id="VAR_071981" description="In SCA40; no effect on subcellular location; increases activation of the JNK signaling pathway; induces apoptosis; dbSNP:rs587782989." evidence="10">
    <original>R</original>
    <variation>H</variation>
    <location>
        <position position="464"/>
    </location>
</feature>
<feature type="sequence variant" id="VAR_057777" description="In dbSNP:rs7160308.">
    <original>L</original>
    <variation>V</variation>
    <location>
        <position position="637"/>
    </location>
</feature>
<feature type="sequence variant" id="VAR_046613" description="In dbSNP:rs17127223.">
    <original>A</original>
    <variation>E</variation>
    <location>
        <position position="811"/>
    </location>
</feature>
<feature type="sequence variant" id="VAR_046614" description="In dbSNP:rs1970911.">
    <original>A</original>
    <variation>V</variation>
    <location>
        <position position="1028"/>
    </location>
</feature>
<feature type="sequence variant" id="VAR_046615" description="In dbSNP:rs941920." evidence="5 6 7 14">
    <original>L</original>
    <variation>P</variation>
    <location>
        <position position="1992"/>
    </location>
</feature>
<feature type="mutagenesis site" description="Abolishes interaction with and activation of GNAI3 and abolishes release of the beta and gamma subunits from the heterotrimeric G-protein complex. Abolishes WNT5A-mediated activation of RAC1. Failure to induce apical cell constriction but does not affect localization to apical cell junctions." evidence="11 13">
    <original>F</original>
    <variation>A</variation>
    <location>
        <position position="1675"/>
    </location>
</feature>
<feature type="mutagenesis site" description="Failure to localize to apical cell junctions and to induce apical cell constriction." evidence="13">
    <location>
        <begin position="2025"/>
        <end position="2028"/>
    </location>
</feature>
<feature type="sequence conflict" description="In Ref. 1; CQ719279." evidence="18" ref="1">
    <original>L</original>
    <variation>F</variation>
    <location>
        <position position="73"/>
    </location>
</feature>
<feature type="sequence conflict" description="In Ref. 3; AAH35914." evidence="18" ref="3">
    <location>
        <begin position="1785"/>
        <end position="1830"/>
    </location>
</feature>
<reference evidence="18" key="1">
    <citation type="patent" date="2002-09-06" number="WO02068579">
        <title>Kits, such as nucleic acid arrays, comprising a majority of human exons or transcripts, for detecting expression and other uses thereof.</title>
        <authorList>
            <person name="Venter J.C."/>
            <person name="Adams M.C."/>
            <person name="Li P.W."/>
            <person name="Myers E.W."/>
        </authorList>
    </citation>
    <scope>NUCLEOTIDE SEQUENCE [MRNA] (ISOFORM 1)</scope>
    <scope>VARIANT PRO-1992</scope>
</reference>
<reference evidence="18" key="2">
    <citation type="journal article" date="2003" name="Nature">
        <title>The DNA sequence and analysis of human chromosome 14.</title>
        <authorList>
            <person name="Heilig R."/>
            <person name="Eckenberg R."/>
            <person name="Petit J.-L."/>
            <person name="Fonknechten N."/>
            <person name="Da Silva C."/>
            <person name="Cattolico L."/>
            <person name="Levy M."/>
            <person name="Barbe V."/>
            <person name="De Berardinis V."/>
            <person name="Ureta-Vidal A."/>
            <person name="Pelletier E."/>
            <person name="Vico V."/>
            <person name="Anthouard V."/>
            <person name="Rowen L."/>
            <person name="Madan A."/>
            <person name="Qin S."/>
            <person name="Sun H."/>
            <person name="Du H."/>
            <person name="Pepin K."/>
            <person name="Artiguenave F."/>
            <person name="Robert C."/>
            <person name="Cruaud C."/>
            <person name="Bruels T."/>
            <person name="Jaillon O."/>
            <person name="Friedlander L."/>
            <person name="Samson G."/>
            <person name="Brottier P."/>
            <person name="Cure S."/>
            <person name="Segurens B."/>
            <person name="Aniere F."/>
            <person name="Samain S."/>
            <person name="Crespeau H."/>
            <person name="Abbasi N."/>
            <person name="Aiach N."/>
            <person name="Boscus D."/>
            <person name="Dickhoff R."/>
            <person name="Dors M."/>
            <person name="Dubois I."/>
            <person name="Friedman C."/>
            <person name="Gouyvenoux M."/>
            <person name="James R."/>
            <person name="Madan A."/>
            <person name="Mairey-Estrada B."/>
            <person name="Mangenot S."/>
            <person name="Martins N."/>
            <person name="Menard M."/>
            <person name="Oztas S."/>
            <person name="Ratcliffe A."/>
            <person name="Shaffer T."/>
            <person name="Trask B."/>
            <person name="Vacherie B."/>
            <person name="Bellemere C."/>
            <person name="Belser C."/>
            <person name="Besnard-Gonnet M."/>
            <person name="Bartol-Mavel D."/>
            <person name="Boutard M."/>
            <person name="Briez-Silla S."/>
            <person name="Combette S."/>
            <person name="Dufosse-Laurent V."/>
            <person name="Ferron C."/>
            <person name="Lechaplais C."/>
            <person name="Louesse C."/>
            <person name="Muselet D."/>
            <person name="Magdelenat G."/>
            <person name="Pateau E."/>
            <person name="Petit E."/>
            <person name="Sirvain-Trukniewicz P."/>
            <person name="Trybou A."/>
            <person name="Vega-Czarny N."/>
            <person name="Bataille E."/>
            <person name="Bluet E."/>
            <person name="Bordelais I."/>
            <person name="Dubois M."/>
            <person name="Dumont C."/>
            <person name="Guerin T."/>
            <person name="Haffray S."/>
            <person name="Hammadi R."/>
            <person name="Muanga J."/>
            <person name="Pellouin V."/>
            <person name="Robert D."/>
            <person name="Wunderle E."/>
            <person name="Gauguet G."/>
            <person name="Roy A."/>
            <person name="Sainte-Marthe L."/>
            <person name="Verdier J."/>
            <person name="Verdier-Discala C."/>
            <person name="Hillier L.W."/>
            <person name="Fulton L."/>
            <person name="McPherson J."/>
            <person name="Matsuda F."/>
            <person name="Wilson R."/>
            <person name="Scarpelli C."/>
            <person name="Gyapay G."/>
            <person name="Wincker P."/>
            <person name="Saurin W."/>
            <person name="Quetier F."/>
            <person name="Waterston R."/>
            <person name="Hood L."/>
            <person name="Weissenbach J."/>
        </authorList>
    </citation>
    <scope>NUCLEOTIDE SEQUENCE [LARGE SCALE GENOMIC DNA]</scope>
</reference>
<reference evidence="18 19" key="3">
    <citation type="journal article" date="2004" name="Genome Res.">
        <title>The status, quality, and expansion of the NIH full-length cDNA project: the Mammalian Gene Collection (MGC).</title>
        <authorList>
            <consortium name="The MGC Project Team"/>
        </authorList>
    </citation>
    <scope>NUCLEOTIDE SEQUENCE [LARGE SCALE MRNA] (ISOFORM 2)</scope>
    <scope>NUCLEOTIDE SEQUENCE [LARGE SCALE MRNA] OF 1658-2028</scope>
    <scope>VARIANT PRO-1992</scope>
    <source>
        <tissue evidence="19">Lymph</tissue>
    </source>
</reference>
<reference evidence="18 20" key="4">
    <citation type="submission" date="2003-02" db="EMBL/GenBank/DDBJ databases">
        <title>Full-length cDNA libraries and normalization.</title>
        <authorList>
            <person name="Li W.B."/>
            <person name="Gruber C."/>
            <person name="Jessee J."/>
            <person name="Polayes D."/>
        </authorList>
    </citation>
    <scope>NUCLEOTIDE SEQUENCE [LARGE SCALE MRNA] OF 1-1748 (ISOFORM 3)</scope>
    <source>
        <tissue evidence="20">B-cell</tissue>
    </source>
</reference>
<reference evidence="18" key="5">
    <citation type="journal article" date="2000" name="DNA Res.">
        <title>Prediction of the coding sequences of unidentified human genes. XVII. The complete sequences of 100 new cDNA clones from brain which code for large proteins in vitro.</title>
        <authorList>
            <person name="Nagase T."/>
            <person name="Kikuno R."/>
            <person name="Ishikawa K."/>
            <person name="Hirosawa M."/>
            <person name="Ohara O."/>
        </authorList>
    </citation>
    <scope>NUCLEOTIDE SEQUENCE [MRNA] OF 707-2028 (ISOFORM 1)</scope>
    <scope>VARIANT PRO-1992</scope>
</reference>
<reference key="6">
    <citation type="journal article" date="2007" name="BMC Genomics">
        <title>The full-ORF clone resource of the German cDNA consortium.</title>
        <authorList>
            <person name="Bechtel S."/>
            <person name="Rosenfelder H."/>
            <person name="Duda A."/>
            <person name="Schmidt C.P."/>
            <person name="Ernst U."/>
            <person name="Wellenreuther R."/>
            <person name="Mehrle A."/>
            <person name="Schuster C."/>
            <person name="Bahr A."/>
            <person name="Bloecker H."/>
            <person name="Heubner D."/>
            <person name="Hoerlein A."/>
            <person name="Michel G."/>
            <person name="Wedler H."/>
            <person name="Koehrer K."/>
            <person name="Ottenwaelder B."/>
            <person name="Poustka A."/>
            <person name="Wiemann S."/>
            <person name="Schupp I."/>
        </authorList>
    </citation>
    <scope>NUCLEOTIDE SEQUENCE [LARGE SCALE MRNA] OF 1687-2028</scope>
    <scope>VARIANT PRO-1992</scope>
    <source>
        <tissue>Stomach</tissue>
    </source>
</reference>
<reference evidence="18" key="7">
    <citation type="journal article" date="2005" name="Traffic">
        <title>A novel hook-related protein family and the characterization of hook-related protein 1.</title>
        <authorList>
            <person name="Simpson F."/>
            <person name="Martin S."/>
            <person name="Evans T.M."/>
            <person name="Kerr M."/>
            <person name="James D.E."/>
            <person name="Parton R.G."/>
            <person name="Teasdale R.D."/>
            <person name="Wicking C."/>
        </authorList>
    </citation>
    <scope>IDENTIFICATION</scope>
</reference>
<reference key="8">
    <citation type="journal article" date="2008" name="Proc. Natl. Acad. Sci. U.S.A.">
        <title>A quantitative atlas of mitotic phosphorylation.</title>
        <authorList>
            <person name="Dephoure N."/>
            <person name="Zhou C."/>
            <person name="Villen J."/>
            <person name="Beausoleil S.A."/>
            <person name="Bakalarski C.E."/>
            <person name="Elledge S.J."/>
            <person name="Gygi S.P."/>
        </authorList>
    </citation>
    <scope>PHOSPHORYLATION [LARGE SCALE ANALYSIS] AT SER-1806</scope>
    <scope>IDENTIFICATION BY MASS SPECTROMETRY [LARGE SCALE ANALYSIS]</scope>
    <source>
        <tissue>Cervix carcinoma</tissue>
    </source>
</reference>
<reference key="9">
    <citation type="journal article" date="2009" name="Sci. Signal.">
        <title>Quantitative phosphoproteomic analysis of T cell receptor signaling reveals system-wide modulation of protein-protein interactions.</title>
        <authorList>
            <person name="Mayya V."/>
            <person name="Lundgren D.H."/>
            <person name="Hwang S.-I."/>
            <person name="Rezaul K."/>
            <person name="Wu L."/>
            <person name="Eng J.K."/>
            <person name="Rodionov V."/>
            <person name="Han D.K."/>
        </authorList>
    </citation>
    <scope>PHOSPHORYLATION [LARGE SCALE ANALYSIS] AT SER-1444</scope>
    <scope>IDENTIFICATION BY MASS SPECTROMETRY [LARGE SCALE ANALYSIS]</scope>
    <source>
        <tissue>Leukemic T-cell</tissue>
    </source>
</reference>
<reference key="10">
    <citation type="journal article" date="2010" name="Mol. Syndromol.">
        <title>Disturbed Wnt signalling due to a mutation in CCDC88C causes an autosomal recessive non-syndromic hydrocephalus with medial diverticulum.</title>
        <authorList>
            <person name="Ekici A.B."/>
            <person name="Hilfinger D."/>
            <person name="Jatzwauk M."/>
            <person name="Thiel C.T."/>
            <person name="Wenzel D."/>
            <person name="Lorenz I."/>
            <person name="Boltshauser E."/>
            <person name="Goecke T.W."/>
            <person name="Staatz G."/>
            <person name="Morris-Rosendahl D.J."/>
            <person name="Sticht H."/>
            <person name="Hehr U."/>
            <person name="Reis A."/>
            <person name="Rauch A."/>
        </authorList>
    </citation>
    <scope>INVOLVEMENT IN HYC1</scope>
</reference>
<reference key="11">
    <citation type="journal article" date="2011" name="Sci. Signal.">
        <title>System-wide temporal characterization of the proteome and phosphoproteome of human embryonic stem cell differentiation.</title>
        <authorList>
            <person name="Rigbolt K.T."/>
            <person name="Prokhorova T.A."/>
            <person name="Akimov V."/>
            <person name="Henningsen J."/>
            <person name="Johansen P.T."/>
            <person name="Kratchmarova I."/>
            <person name="Kassem M."/>
            <person name="Mann M."/>
            <person name="Olsen J.V."/>
            <person name="Blagoev B."/>
        </authorList>
    </citation>
    <scope>IDENTIFICATION BY MASS SPECTROMETRY [LARGE SCALE ANALYSIS]</scope>
</reference>
<reference key="12">
    <citation type="journal article" date="2012" name="J. Med. Genet.">
        <title>Two novel CCDC&gt;88C mutations confirm the role of DAPLE in autosomal recessive congenital hydrocephalus.</title>
        <authorList>
            <person name="Drielsma A."/>
            <person name="Jalas C."/>
            <person name="Simonis N."/>
            <person name="Desir J."/>
            <person name="Simanovsky N."/>
            <person name="Pirson I."/>
            <person name="Elpeleg O."/>
            <person name="Abramowicz M."/>
            <person name="Edvardson S."/>
        </authorList>
    </citation>
    <scope>INVOLVEMENT IN HYC1</scope>
</reference>
<reference key="13">
    <citation type="journal article" date="2013" name="J. Proteome Res.">
        <title>Toward a comprehensive characterization of a human cancer cell phosphoproteome.</title>
        <authorList>
            <person name="Zhou H."/>
            <person name="Di Palma S."/>
            <person name="Preisinger C."/>
            <person name="Peng M."/>
            <person name="Polat A.N."/>
            <person name="Heck A.J."/>
            <person name="Mohammed S."/>
        </authorList>
    </citation>
    <scope>PHOSPHORYLATION [LARGE SCALE ANALYSIS] AT SER-227; SER-239; SER-486; SER-1601; SER-1806 AND THR-1954</scope>
    <scope>IDENTIFICATION BY MASS SPECTROMETRY [LARGE SCALE ANALYSIS]</scope>
    <source>
        <tissue>Cervix carcinoma</tissue>
        <tissue>Erythroleukemia</tissue>
    </source>
</reference>
<reference key="14">
    <citation type="journal article" date="2018" name="J. Biol. Chem.">
        <title>A biochemical and genetic discovery pipeline identifies PLCdelta4b as a nonreceptor activator of heterotrimeric G-proteins.</title>
        <authorList>
            <person name="Maziarz M."/>
            <person name="Broselid S."/>
            <person name="DiGiacomo V."/>
            <person name="Park J.C."/>
            <person name="Luebbers A."/>
            <person name="Garcia-Navarrete L."/>
            <person name="Blanco-Canosa J.B."/>
            <person name="Baillie G.S."/>
            <person name="Garcia-Marcos M."/>
        </authorList>
    </citation>
    <scope>GBA MOTIF</scope>
</reference>
<reference key="15">
    <citation type="journal article" date="2015" name="Elife">
        <title>Daple is a novel non-receptor GEF required for trimeric G protein activation in Wnt signaling.</title>
        <authorList>
            <person name="Aznar N."/>
            <person name="Midde K.K."/>
            <person name="Dunkel Y."/>
            <person name="Lopez-Sanchez I."/>
            <person name="Pavlova Y."/>
            <person name="Marivin A."/>
            <person name="Barbazan J."/>
            <person name="Murray F."/>
            <person name="Nitsche U."/>
            <person name="Janssen K.P."/>
            <person name="Willert K."/>
            <person name="Goel A."/>
            <person name="Abal M."/>
            <person name="Garcia-Marcos M."/>
            <person name="Ghosh P."/>
        </authorList>
    </citation>
    <scope>FUNCTION</scope>
    <scope>INTERACTION WITH DVL1; FZD7; GNAI1; GNAI2 AND GNAI3</scope>
    <scope>SUBCELLULAR LOCATION</scope>
    <scope>GBA MOTIF</scope>
    <scope>MUTAGENESIS OF PHE-1675</scope>
</reference>
<reference key="16">
    <citation type="journal article" date="2019" name="J. Cell Biol.">
        <title>GPCR-independent activation of G proteins promotes apical cell constriction in vivo.</title>
        <authorList>
            <person name="Marivin A."/>
            <person name="Morozova V."/>
            <person name="Walawalkar I."/>
            <person name="Leyme A."/>
            <person name="Kretov D.A."/>
            <person name="Cifuentes D."/>
            <person name="Dominguez I."/>
            <person name="Garcia-Marcos M."/>
        </authorList>
    </citation>
    <scope>FUNCTION</scope>
    <scope>SUBCELLULAR LOCATION</scope>
    <scope>ROLE OF PDZ DOMAIN</scope>
    <scope>MUTAGENESIS OF PHE-1675 AND 2025-GLY--VAL-2028</scope>
</reference>
<reference key="17">
    <citation type="journal article" date="2014" name="J. Med. Genet.">
        <title>A novel missense mutation in CCDC88C activates the JNK pathway and causes a dominant form of spinocerebellar ataxia.</title>
        <authorList>
            <person name="Tsoi H."/>
            <person name="Yu A.C."/>
            <person name="Chen Z.S."/>
            <person name="Ng N.K."/>
            <person name="Chan A.Y."/>
            <person name="Yuen L.Y."/>
            <person name="Abrigo J.M."/>
            <person name="Tsang S.Y."/>
            <person name="Tsui S.K."/>
            <person name="Tong T.M."/>
            <person name="Lo I.F."/>
            <person name="Lam S.T."/>
            <person name="Mok V.C."/>
            <person name="Wong L.K."/>
            <person name="Ngo J.C."/>
            <person name="Lau K.F."/>
            <person name="Chan T.F."/>
            <person name="Chan H.Y."/>
        </authorList>
    </citation>
    <scope>INVOLVEMENT IN SCA40</scope>
    <scope>VARIANT SCA40 HIS-464</scope>
    <scope>CHARACTERIZATION OF VARIANT SCA40 HIS-464</scope>
    <scope>SUBCELLULAR LOCATION</scope>
</reference>
<dbReference type="EMBL" id="CQ719279">
    <property type="status" value="NOT_ANNOTATED_CDS"/>
    <property type="molecule type" value="mRNA"/>
</dbReference>
<dbReference type="EMBL" id="AL133153">
    <property type="status" value="NOT_ANNOTATED_CDS"/>
    <property type="molecule type" value="Genomic_DNA"/>
</dbReference>
<dbReference type="EMBL" id="AL135818">
    <property type="status" value="NOT_ANNOTATED_CDS"/>
    <property type="molecule type" value="Genomic_DNA"/>
</dbReference>
<dbReference type="EMBL" id="BC028565">
    <property type="protein sequence ID" value="AAH28565.2"/>
    <property type="molecule type" value="mRNA"/>
</dbReference>
<dbReference type="EMBL" id="BC035914">
    <property type="protein sequence ID" value="AAH35914.1"/>
    <property type="molecule type" value="mRNA"/>
</dbReference>
<dbReference type="EMBL" id="BX248302">
    <property type="protein sequence ID" value="CAD62629.1"/>
    <property type="molecule type" value="mRNA"/>
</dbReference>
<dbReference type="EMBL" id="AB040942">
    <property type="protein sequence ID" value="BAA96033.2"/>
    <property type="status" value="ALT_SEQ"/>
    <property type="molecule type" value="mRNA"/>
</dbReference>
<dbReference type="EMBL" id="AL833046">
    <property type="protein sequence ID" value="CAH10602.1"/>
    <property type="status" value="ALT_SEQ"/>
    <property type="molecule type" value="mRNA"/>
</dbReference>
<dbReference type="CCDS" id="CCDS45151.1">
    <molecule id="Q9P219-1"/>
</dbReference>
<dbReference type="RefSeq" id="NP_001073883.2">
    <molecule id="Q9P219-1"/>
    <property type="nucleotide sequence ID" value="NM_001080414.4"/>
</dbReference>
<dbReference type="SMR" id="Q9P219"/>
<dbReference type="BioGRID" id="136368">
    <property type="interactions" value="72"/>
</dbReference>
<dbReference type="FunCoup" id="Q9P219">
    <property type="interactions" value="1038"/>
</dbReference>
<dbReference type="IntAct" id="Q9P219">
    <property type="interactions" value="34"/>
</dbReference>
<dbReference type="MINT" id="Q9P219"/>
<dbReference type="STRING" id="9606.ENSP00000374507"/>
<dbReference type="GlyCosmos" id="Q9P219">
    <property type="glycosylation" value="2 sites, 1 glycan"/>
</dbReference>
<dbReference type="GlyGen" id="Q9P219">
    <property type="glycosylation" value="9 sites, 1 O-linked glycan (7 sites)"/>
</dbReference>
<dbReference type="iPTMnet" id="Q9P219"/>
<dbReference type="MetOSite" id="Q9P219"/>
<dbReference type="PhosphoSitePlus" id="Q9P219"/>
<dbReference type="BioMuta" id="CCDC88C"/>
<dbReference type="DMDM" id="308153605"/>
<dbReference type="jPOST" id="Q9P219"/>
<dbReference type="MassIVE" id="Q9P219"/>
<dbReference type="PaxDb" id="9606-ENSP00000374507"/>
<dbReference type="PeptideAtlas" id="Q9P219"/>
<dbReference type="ProteomicsDB" id="83712">
    <molecule id="Q9P219-1"/>
</dbReference>
<dbReference type="ProteomicsDB" id="83713">
    <molecule id="Q9P219-2"/>
</dbReference>
<dbReference type="ProteomicsDB" id="83714">
    <molecule id="Q9P219-3"/>
</dbReference>
<dbReference type="Pumba" id="Q9P219"/>
<dbReference type="Antibodypedia" id="105">
    <property type="antibodies" value="17 antibodies from 10 providers"/>
</dbReference>
<dbReference type="DNASU" id="440193"/>
<dbReference type="Ensembl" id="ENST00000389857.11">
    <molecule id="Q9P219-1"/>
    <property type="protein sequence ID" value="ENSP00000374507.6"/>
    <property type="gene ID" value="ENSG00000015133.20"/>
</dbReference>
<dbReference type="GeneID" id="440193"/>
<dbReference type="KEGG" id="hsa:440193"/>
<dbReference type="MANE-Select" id="ENST00000389857.11">
    <property type="protein sequence ID" value="ENSP00000374507.6"/>
    <property type="RefSeq nucleotide sequence ID" value="NM_001080414.4"/>
    <property type="RefSeq protein sequence ID" value="NP_001073883.2"/>
</dbReference>
<dbReference type="UCSC" id="uc010aty.4">
    <molecule id="Q9P219-1"/>
    <property type="organism name" value="human"/>
</dbReference>
<dbReference type="AGR" id="HGNC:19967"/>
<dbReference type="CTD" id="440193"/>
<dbReference type="DisGeNET" id="440193"/>
<dbReference type="GeneCards" id="CCDC88C"/>
<dbReference type="HGNC" id="HGNC:19967">
    <property type="gene designation" value="CCDC88C"/>
</dbReference>
<dbReference type="HPA" id="ENSG00000015133">
    <property type="expression patterns" value="Tissue enhanced (bone marrow, lymphoid tissue)"/>
</dbReference>
<dbReference type="MalaCards" id="CCDC88C"/>
<dbReference type="MIM" id="236600">
    <property type="type" value="phenotype"/>
</dbReference>
<dbReference type="MIM" id="611204">
    <property type="type" value="gene"/>
</dbReference>
<dbReference type="MIM" id="616053">
    <property type="type" value="phenotype"/>
</dbReference>
<dbReference type="neXtProt" id="NX_Q9P219"/>
<dbReference type="OpenTargets" id="ENSG00000015133"/>
<dbReference type="Orphanet" id="269510">
    <property type="disease" value="Congenital non-communicating hydrocephalus"/>
</dbReference>
<dbReference type="Orphanet" id="423275">
    <property type="disease" value="Spinocerebellar ataxia type 40"/>
</dbReference>
<dbReference type="PharmGKB" id="PA162381879"/>
<dbReference type="VEuPathDB" id="HostDB:ENSG00000015133"/>
<dbReference type="eggNOG" id="KOG4643">
    <property type="taxonomic scope" value="Eukaryota"/>
</dbReference>
<dbReference type="GeneTree" id="ENSGT00940000154785"/>
<dbReference type="HOGENOM" id="CLU_001421_1_1_1"/>
<dbReference type="InParanoid" id="Q9P219"/>
<dbReference type="OMA" id="RHNASDP"/>
<dbReference type="OrthoDB" id="10254988at2759"/>
<dbReference type="PAN-GO" id="Q9P219">
    <property type="GO annotations" value="6 GO annotations based on evolutionary models"/>
</dbReference>
<dbReference type="PhylomeDB" id="Q9P219"/>
<dbReference type="TreeFam" id="TF320231"/>
<dbReference type="PathwayCommons" id="Q9P219"/>
<dbReference type="Reactome" id="R-HSA-5368598">
    <property type="pathway name" value="Negative regulation of TCF-dependent signaling by DVL-interacting proteins"/>
</dbReference>
<dbReference type="SignaLink" id="Q9P219"/>
<dbReference type="SIGNOR" id="Q9P219"/>
<dbReference type="BioGRID-ORCS" id="440193">
    <property type="hits" value="15 hits in 1159 CRISPR screens"/>
</dbReference>
<dbReference type="ChiTaRS" id="CCDC88C">
    <property type="organism name" value="human"/>
</dbReference>
<dbReference type="GenomeRNAi" id="440193"/>
<dbReference type="Pharos" id="Q9P219">
    <property type="development level" value="Tbio"/>
</dbReference>
<dbReference type="PRO" id="PR:Q9P219"/>
<dbReference type="Proteomes" id="UP000005640">
    <property type="component" value="Chromosome 14"/>
</dbReference>
<dbReference type="RNAct" id="Q9P219">
    <property type="molecule type" value="protein"/>
</dbReference>
<dbReference type="Bgee" id="ENSG00000015133">
    <property type="expression patterns" value="Expressed in right uterine tube and 138 other cell types or tissues"/>
</dbReference>
<dbReference type="ExpressionAtlas" id="Q9P219">
    <property type="expression patterns" value="baseline and differential"/>
</dbReference>
<dbReference type="GO" id="GO:0043296">
    <property type="term" value="C:apical junction complex"/>
    <property type="evidence" value="ECO:0007669"/>
    <property type="project" value="Ensembl"/>
</dbReference>
<dbReference type="GO" id="GO:0030054">
    <property type="term" value="C:cell junction"/>
    <property type="evidence" value="ECO:0000314"/>
    <property type="project" value="HPA"/>
</dbReference>
<dbReference type="GO" id="GO:0005813">
    <property type="term" value="C:centrosome"/>
    <property type="evidence" value="ECO:0000318"/>
    <property type="project" value="GO_Central"/>
</dbReference>
<dbReference type="GO" id="GO:0005737">
    <property type="term" value="C:cytoplasm"/>
    <property type="evidence" value="ECO:0000314"/>
    <property type="project" value="UniProtKB"/>
</dbReference>
<dbReference type="GO" id="GO:0005576">
    <property type="term" value="C:extracellular region"/>
    <property type="evidence" value="ECO:0007669"/>
    <property type="project" value="GOC"/>
</dbReference>
<dbReference type="GO" id="GO:0051959">
    <property type="term" value="F:dynein light intermediate chain binding"/>
    <property type="evidence" value="ECO:0000318"/>
    <property type="project" value="GO_Central"/>
</dbReference>
<dbReference type="GO" id="GO:0005109">
    <property type="term" value="F:frizzled binding"/>
    <property type="evidence" value="ECO:0000353"/>
    <property type="project" value="UniProtKB"/>
</dbReference>
<dbReference type="GO" id="GO:0001965">
    <property type="term" value="F:G-protein alpha-subunit binding"/>
    <property type="evidence" value="ECO:0000353"/>
    <property type="project" value="UniProtKB"/>
</dbReference>
<dbReference type="GO" id="GO:0005085">
    <property type="term" value="F:guanyl-nucleotide exchange factor activity"/>
    <property type="evidence" value="ECO:0000314"/>
    <property type="project" value="UniProtKB"/>
</dbReference>
<dbReference type="GO" id="GO:0042802">
    <property type="term" value="F:identical protein binding"/>
    <property type="evidence" value="ECO:0000250"/>
    <property type="project" value="UniProtKB"/>
</dbReference>
<dbReference type="GO" id="GO:0008017">
    <property type="term" value="F:microtubule binding"/>
    <property type="evidence" value="ECO:0000318"/>
    <property type="project" value="GO_Central"/>
</dbReference>
<dbReference type="GO" id="GO:0030165">
    <property type="term" value="F:PDZ domain binding"/>
    <property type="evidence" value="ECO:0000250"/>
    <property type="project" value="UniProtKB"/>
</dbReference>
<dbReference type="GO" id="GO:0046983">
    <property type="term" value="F:protein dimerization activity"/>
    <property type="evidence" value="ECO:0007669"/>
    <property type="project" value="Ensembl"/>
</dbReference>
<dbReference type="GO" id="GO:0003383">
    <property type="term" value="P:apical constriction"/>
    <property type="evidence" value="ECO:0000314"/>
    <property type="project" value="UniProtKB"/>
</dbReference>
<dbReference type="GO" id="GO:0044782">
    <property type="term" value="P:cilium organization"/>
    <property type="evidence" value="ECO:0007669"/>
    <property type="project" value="Ensembl"/>
</dbReference>
<dbReference type="GO" id="GO:0031122">
    <property type="term" value="P:cytoplasmic microtubule organization"/>
    <property type="evidence" value="ECO:0000318"/>
    <property type="project" value="GO_Central"/>
</dbReference>
<dbReference type="GO" id="GO:0030705">
    <property type="term" value="P:cytoskeleton-dependent intracellular transport"/>
    <property type="evidence" value="ECO:0000318"/>
    <property type="project" value="GO_Central"/>
</dbReference>
<dbReference type="GO" id="GO:0001578">
    <property type="term" value="P:microtubule bundle formation"/>
    <property type="evidence" value="ECO:0007669"/>
    <property type="project" value="Ensembl"/>
</dbReference>
<dbReference type="GO" id="GO:0120197">
    <property type="term" value="P:mucociliary clearance"/>
    <property type="evidence" value="ECO:0007669"/>
    <property type="project" value="Ensembl"/>
</dbReference>
<dbReference type="GO" id="GO:0090090">
    <property type="term" value="P:negative regulation of canonical Wnt signaling pathway"/>
    <property type="evidence" value="ECO:0000315"/>
    <property type="project" value="UniProtKB"/>
</dbReference>
<dbReference type="GO" id="GO:0007026">
    <property type="term" value="P:negative regulation of microtubule depolymerization"/>
    <property type="evidence" value="ECO:0007669"/>
    <property type="project" value="Ensembl"/>
</dbReference>
<dbReference type="GO" id="GO:0035567">
    <property type="term" value="P:non-canonical Wnt signaling pathway"/>
    <property type="evidence" value="ECO:0000315"/>
    <property type="project" value="UniProtKB"/>
</dbReference>
<dbReference type="GO" id="GO:0046330">
    <property type="term" value="P:positive regulation of JNK cascade"/>
    <property type="evidence" value="ECO:0000315"/>
    <property type="project" value="UniProtKB"/>
</dbReference>
<dbReference type="GO" id="GO:0031648">
    <property type="term" value="P:protein destabilization"/>
    <property type="evidence" value="ECO:0000250"/>
    <property type="project" value="UniProtKB"/>
</dbReference>
<dbReference type="GO" id="GO:1902691">
    <property type="term" value="P:respiratory basal cell differentiation"/>
    <property type="evidence" value="ECO:0007669"/>
    <property type="project" value="Ensembl"/>
</dbReference>
<dbReference type="GO" id="GO:0007264">
    <property type="term" value="P:small GTPase-mediated signal transduction"/>
    <property type="evidence" value="ECO:0000314"/>
    <property type="project" value="UniProtKB"/>
</dbReference>
<dbReference type="GO" id="GO:0060071">
    <property type="term" value="P:Wnt signaling pathway, planar cell polarity pathway"/>
    <property type="evidence" value="ECO:0007669"/>
    <property type="project" value="Ensembl"/>
</dbReference>
<dbReference type="CDD" id="cd22228">
    <property type="entry name" value="HkD_Daple"/>
    <property type="match status" value="1"/>
</dbReference>
<dbReference type="FunFam" id="1.10.418.10:FF:000035">
    <property type="entry name" value="girdin isoform X1"/>
    <property type="match status" value="1"/>
</dbReference>
<dbReference type="Gene3D" id="1.10.418.10">
    <property type="entry name" value="Calponin-like domain"/>
    <property type="match status" value="1"/>
</dbReference>
<dbReference type="InterPro" id="IPR001715">
    <property type="entry name" value="CH_dom"/>
</dbReference>
<dbReference type="InterPro" id="IPR036872">
    <property type="entry name" value="CH_dom_sf"/>
</dbReference>
<dbReference type="InterPro" id="IPR043936">
    <property type="entry name" value="HOOK_N"/>
</dbReference>
<dbReference type="PANTHER" id="PTHR18947">
    <property type="entry name" value="HOOK PROTEINS"/>
    <property type="match status" value="1"/>
</dbReference>
<dbReference type="PANTHER" id="PTHR18947:SF31">
    <property type="entry name" value="PROTEIN DAPLE"/>
    <property type="match status" value="1"/>
</dbReference>
<dbReference type="Pfam" id="PF19047">
    <property type="entry name" value="HOOK_N"/>
    <property type="match status" value="1"/>
</dbReference>
<dbReference type="SUPFAM" id="SSF116907">
    <property type="entry name" value="Hook domain"/>
    <property type="match status" value="1"/>
</dbReference>
<dbReference type="PROSITE" id="PS50021">
    <property type="entry name" value="CH"/>
    <property type="match status" value="1"/>
</dbReference>
<comment type="function">
    <text evidence="11 13">Required for activation of guanine nucleotide-binding proteins (G-proteins) during non-canonical Wnt signaling (PubMed:26126266). Binds to ligand-activated Wnt receptor FZD7, displacing DVL1 from the FZD7 receptor and leading to inhibition of canonical Wnt signaling (PubMed:26126266). Acts as a non-receptor guanine nucleotide exchange factor by also binding to guanine nucleotide-binding protein G(i) alpha (Gi-alpha) subunits, leading to their activation (PubMed:26126266). Binding to Gi-alpha subunits displaces the beta and gamma subunits from the heterotrimeric G-protein complex, triggering non-canonical Wnt responses such as activation of RAC1 and PI3K-AKT signaling (PubMed:26126266). Promotes apical constriction of cells via ARHGEF18 (PubMed:30948426).</text>
</comment>
<comment type="subunit">
    <text evidence="1 11">Homooligomer (By similarity). Interacts with DVL1 (via PDZ domain); dissociates following initiation of non-canonical Wnt signaling (PubMed:26126266). Interacts (via C-terminus) with ligand-activated Wnt receptor FZD7; competes with DVL1 for binding to FZD7 and displaces DVL1 from ligand-activated FZD7 (PubMed:26126266). Interacts (via GBA motif) with guanine nucleotide-binding protein G(i) alpha subunits GNAI1, GNAI2 and GNAI3 (inactive GDP-bound form); interacts with higher affinity with GNAI1 and GNAI3 than with GNAI2 and interaction leads to G(i) alpha subunit activation (PubMed:26126266). Does not interact with GNAO1 (PubMed:26126266).</text>
</comment>
<comment type="subcellular location">
    <subcellularLocation>
        <location evidence="10 11">Cytoplasm</location>
    </subcellularLocation>
    <subcellularLocation>
        <location evidence="13">Cell junction</location>
    </subcellularLocation>
    <text evidence="13">Enriched at apical cell junctions.</text>
</comment>
<comment type="alternative products">
    <event type="alternative splicing"/>
    <isoform>
        <id>Q9P219-1</id>
        <name evidence="5 14">1</name>
        <sequence type="displayed"/>
    </isoform>
    <isoform>
        <id>Q9P219-2</id>
        <name evidence="6">2</name>
        <sequence type="described" ref="VSP_052390 VSP_052391"/>
    </isoform>
    <isoform>
        <id>Q9P219-3</id>
        <name evidence="15">3</name>
        <sequence type="described" ref="VSP_052389 VSP_052392"/>
    </isoform>
</comment>
<comment type="domain">
    <text evidence="11 12">The GBA (G-alpha binding and activating) motif mediates binding to the alpha subunits of guanine nucleotide-binding proteins (G proteins).</text>
</comment>
<comment type="domain">
    <text evidence="13">The PDZ domain is required for localization to apical junctions.</text>
</comment>
<comment type="disease" evidence="8 9">
    <disease id="DI-03639">
        <name>Hydrocephalus, congenital, 1</name>
        <acronym>HYC1</acronym>
        <description>A form of congenital hydrocephalus, a disease characterized by onset in utero of enlarged ventricles due to accumulation of ventricular cerebrospinal fluid. Affected individuals may have neurologic impairment. HYC1 inheritance is autosomal recessive.</description>
        <dbReference type="MIM" id="236600"/>
    </disease>
    <text>The disease is caused by variants affecting the gene represented in this entry.</text>
</comment>
<comment type="disease" evidence="10">
    <disease id="DI-04242">
        <name>Spinocerebellar ataxia 40</name>
        <acronym>SCA40</acronym>
        <description>A form of spinocerebellar ataxia, a clinically and genetically heterogeneous group of cerebellar disorders. Patients show progressive incoordination of gait and often poor coordination of hands, speech and eye movements, due to degeneration of the cerebellum with variable involvement of the brainstem and spinal cord. SCA40 is an autosomal dominant, slowly progressive form. Brain MRI shows pontocerebellar atrophy along with a global reduction in brain volume.</description>
        <dbReference type="MIM" id="616053"/>
    </disease>
    <text>The disease is caused by variants affecting the gene represented in this entry.</text>
</comment>
<comment type="miscellaneous">
    <molecule>Isoform 3</molecule>
    <text evidence="18">Due to intron retention.</text>
</comment>
<comment type="similarity">
    <text evidence="18">Belongs to the CCDC88 family.</text>
</comment>
<comment type="sequence caution" evidence="18">
    <conflict type="miscellaneous discrepancy">
        <sequence resource="EMBL-CDS" id="BAA96033"/>
    </conflict>
    <text>Contaminating sequence. Sequence of unknown origin in the N-terminal part.</text>
</comment>
<comment type="sequence caution" evidence="18">
    <conflict type="frameshift">
        <sequence resource="EMBL-CDS" id="CAH10602"/>
    </conflict>
</comment>
<gene>
    <name type="primary">CCDC88C</name>
    <name type="synonym">DAPLE</name>
    <name evidence="21" type="synonym">KIAA1509</name>
</gene>
<name>DAPLE_HUMAN</name>
<accession>Q9P219</accession>
<accession>Q69YK1</accession>
<accession>Q7L1M2</accession>
<accession>Q86SX7</accession>
<accession>Q8IYG8</accession>
<protein>
    <recommendedName>
        <fullName>Protein Daple</fullName>
    </recommendedName>
    <alternativeName>
        <fullName>Coiled-coil domain-containing protein 88C</fullName>
    </alternativeName>
    <alternativeName>
        <fullName>Dvl-associating protein with a high frequency of leucine residues</fullName>
        <shortName>hDaple</shortName>
    </alternativeName>
    <alternativeName>
        <fullName>Hook-related protein 2</fullName>
        <shortName>HkRP2</shortName>
    </alternativeName>
</protein>
<keyword id="KW-0025">Alternative splicing</keyword>
<keyword id="KW-0965">Cell junction</keyword>
<keyword id="KW-0175">Coiled coil</keyword>
<keyword id="KW-0963">Cytoplasm</keyword>
<keyword id="KW-0225">Disease variant</keyword>
<keyword id="KW-0344">Guanine-nucleotide releasing factor</keyword>
<keyword id="KW-0523">Neurodegeneration</keyword>
<keyword id="KW-0597">Phosphoprotein</keyword>
<keyword id="KW-1267">Proteomics identification</keyword>
<keyword id="KW-1185">Reference proteome</keyword>
<keyword id="KW-0950">Spinocerebellar ataxia</keyword>
<keyword id="KW-0879">Wnt signaling pathway</keyword>
<proteinExistence type="evidence at protein level"/>
<evidence type="ECO:0000250" key="1">
    <source>
        <dbReference type="UniProtKB" id="Q6VGS5"/>
    </source>
</evidence>
<evidence type="ECO:0000255" key="2"/>
<evidence type="ECO:0000255" key="3">
    <source>
        <dbReference type="PROSITE-ProRule" id="PRU00044"/>
    </source>
</evidence>
<evidence type="ECO:0000256" key="4">
    <source>
        <dbReference type="SAM" id="MobiDB-lite"/>
    </source>
</evidence>
<evidence type="ECO:0000269" key="5">
    <source>
    </source>
</evidence>
<evidence type="ECO:0000269" key="6">
    <source>
    </source>
</evidence>
<evidence type="ECO:0000269" key="7">
    <source>
    </source>
</evidence>
<evidence type="ECO:0000269" key="8">
    <source>
    </source>
</evidence>
<evidence type="ECO:0000269" key="9">
    <source>
    </source>
</evidence>
<evidence type="ECO:0000269" key="10">
    <source>
    </source>
</evidence>
<evidence type="ECO:0000269" key="11">
    <source>
    </source>
</evidence>
<evidence type="ECO:0000269" key="12">
    <source>
    </source>
</evidence>
<evidence type="ECO:0000269" key="13">
    <source>
    </source>
</evidence>
<evidence type="ECO:0000269" key="14">
    <source ref="1"/>
</evidence>
<evidence type="ECO:0000269" key="15">
    <source ref="4"/>
</evidence>
<evidence type="ECO:0000303" key="16">
    <source>
    </source>
</evidence>
<evidence type="ECO:0000303" key="17">
    <source ref="4"/>
</evidence>
<evidence type="ECO:0000305" key="18"/>
<evidence type="ECO:0000312" key="19">
    <source>
        <dbReference type="EMBL" id="AAH35914.1"/>
    </source>
</evidence>
<evidence type="ECO:0000312" key="20">
    <source>
        <dbReference type="EMBL" id="CAD62629.1"/>
    </source>
</evidence>
<evidence type="ECO:0000312" key="21">
    <source>
        <dbReference type="HGNC" id="HGNC:19967"/>
    </source>
</evidence>
<evidence type="ECO:0007744" key="22">
    <source>
    </source>
</evidence>
<evidence type="ECO:0007744" key="23">
    <source>
    </source>
</evidence>
<evidence type="ECO:0007744" key="24">
    <source>
    </source>
</evidence>
<sequence>MDVTVSELLELFLQSPLVTWVKTFGPFGSGSQDNLTMYMDLVDGIFLNQIMLQIDPRPTNQRINKHVNNDVNLRIQNLTILVRNIKTYYQEVLQQLIVMNLPNVLMIGRDPLSGKSMEEIKKVLLLVLGCAVQCERKEEFIERIKQLDIETQAGIVAHIQEVTHNQENVFDLQWLELPDVAPEELEALSRSMVLHLRRLIDQRDECTELIVDLTQERDYLQAQHPPSPIKSSSADSTPSPTSSLSSEDKQHLAVELADTKARLRRVRQELEDKTEQLVDTRHEVDQLVLELQKVKQENIQLAADARSARAYRDELDSLREKANRVERLELELTRCKEKLHDVDFYKARMEELREDNIILIETKAMLEEQLTAARARGDKVHELEKENLQLKSKLHDLELDRDTDKKRIEELLEENMVLEIAQKQSMNESAHLGWELEQLSKNADLSDASRKSFVFELNECASSRILKLEKENQSLQSTIQGLRDASLVLEESGLKCGELEKENHQLSKKIEKLQTQLEREKQSNQDLETLSEELIREKEQLQSDMETLKADKARQIKDLEQEKDHLNRAMWSLRERSQVSSEARMKDVEKENKALHQTVTEANGKLSQLEFEKRQLHRDLEQAKEKGERAEKLERELQRLQEENGRLARKVTSLETATEKVEALEHESQGLQLENRTLRKSLDTLQNVSLQLEGLERDNKQLDAENLELRRLVETMRFTSTKLAQMERENQQLEREKEELRKNVDLLKALGKKSERLELSYQSVSAENLRLQQSLESSSHKTQTLESELGELEAERQALRRDLEALRLANAQLEGAEKDRKALEQEVAQLEKDKKLLEKEAKRLWQQVELKDAVLDDSTAKLSAVEKESRALDKELARCRDAAGKLKELEKDNRDLTKQVTVHARTLTTLREDLVLEKLKSQQLSSELDKLSQELEKVGLNRELLLQEDDSGSDTKYKILEGRNESALKTTLAMKEEKIVLLEAQMEEKASLNRQLESELQMLKKECETLRQNQGEGQHLQNSFKHPAGKTAASHQGKEAWGPGHKEATMELLRVKDRAIELERNNAALQAEKQLLKEQLQHLETQNVTFSSQILTLQKQSAFLQEHNTTLQTQTAKLQVENSTLSSQSAALTAQYTLLQNHHTAKETENESLQRQQEQLTAAYEALLQDHEHLGTLHERQSAEYEALIRQHSCLKTLHRNLELEHKELGERHGDMLKRKAELEEREKVLTTEREALQQEQRTNALAMGENQRLRGELDRVNFLHHQLKGEYEELHAHTKELKTSLNNAQLELNRWQARFDELKEQHQTMDISLTKLDNHCELLSRLKGNLEEENHHLLSQIQLLSQQNQMLLEQNMENKEQYHEEQKQYIDKLNALRRHKEKLEEKIMDQYKFYDPPPKKKNHWIGAKALVKLIKPKKEGSRERLKSTVDSPPWQLESSDPASPAASQPLRSQAENPDTPALGSNCAEERDAHNGSVGKGPGDLKPKRGSPHRGSLDRTDASTDLAMRSWPSELGSRTCSTSATTTAPSNSTPIARHPGRTKGYNSDDNLCEPSLEFEVPNHRQYVSRPSSLESSRNTSSNSSPLNLKGSSEQLHGRSESFSSEDLIPSRDLATLPREASTPGRNALGRHEYPLPRNGPLPQEGAQKRGTAPPYVGVRPCSASPSSEMVTLEEFLEESNRSSPTHDTPSCRDDLLSDYFRKASDPPAIGGQPGPPAKKEGAKMPTNFVAPTVKMAAPTSEGRPLKPGQYVKPNFRLTEAEAPPSVAPRQAQPPQSLSLGRPRQAPVPPASHAPASRSASLSRAFSLASADLLRASGPEACKQESPQKLGAPEALGGRETGSHTLQSPAPPSSHSLARERTPLVGKAGSSCQGPGPRSRPLDTRRFSLAPPKEERLAPLHQSATAPAIATAGAGAAAAGSGSNSQLLHFSPAAAPAARTKPKAPPRSGEVATITPVRAGLSLSEGDGVPGQGCSEGLPAKSPGRSPDLAPHLGRALEDCSRGSVSKSSPASPEPGGDPQTVWYEYGCV</sequence>